<feature type="chain" id="PRO_1000022268" description="Potassium-transporting ATPase KdpC subunit">
    <location>
        <begin position="1"/>
        <end position="193"/>
    </location>
</feature>
<feature type="transmembrane region" description="Helical" evidence="1">
    <location>
        <begin position="7"/>
        <end position="27"/>
    </location>
</feature>
<organism>
    <name type="scientific">Burkholderia ambifaria (strain ATCC BAA-244 / DSM 16087 / CCUG 44356 / LMG 19182 / AMMD)</name>
    <name type="common">Burkholderia cepacia (strain AMMD)</name>
    <dbReference type="NCBI Taxonomy" id="339670"/>
    <lineage>
        <taxon>Bacteria</taxon>
        <taxon>Pseudomonadati</taxon>
        <taxon>Pseudomonadota</taxon>
        <taxon>Betaproteobacteria</taxon>
        <taxon>Burkholderiales</taxon>
        <taxon>Burkholderiaceae</taxon>
        <taxon>Burkholderia</taxon>
        <taxon>Burkholderia cepacia complex</taxon>
    </lineage>
</organism>
<accession>Q0BD93</accession>
<name>KDPC_BURCM</name>
<sequence>MKTLIRPLVVIFVVLTAVTGLAYPAVMTVFGQAVFPSQANGSLIEKDGRAVGSALIGQPFDAPKYFWGRLSATSPMPYNASGSGGSNLGPLNPSLAEQVKARIAALRDAGTDMSTPVPVDLVTASASGLDPEITPAAAAYQVERVAKARNLSADAVAQLVAANTAGRQFGVLGEPRVNVLKLNLALDAAQAAH</sequence>
<evidence type="ECO:0000255" key="1">
    <source>
        <dbReference type="HAMAP-Rule" id="MF_00276"/>
    </source>
</evidence>
<protein>
    <recommendedName>
        <fullName evidence="1">Potassium-transporting ATPase KdpC subunit</fullName>
    </recommendedName>
    <alternativeName>
        <fullName evidence="1">ATP phosphohydrolase [potassium-transporting] C chain</fullName>
    </alternativeName>
    <alternativeName>
        <fullName evidence="1">Potassium-binding and translocating subunit C</fullName>
    </alternativeName>
    <alternativeName>
        <fullName evidence="1">Potassium-translocating ATPase C chain</fullName>
    </alternativeName>
</protein>
<comment type="function">
    <text evidence="1">Part of the high-affinity ATP-driven potassium transport (or Kdp) system, which catalyzes the hydrolysis of ATP coupled with the electrogenic transport of potassium into the cytoplasm. This subunit acts as a catalytic chaperone that increases the ATP-binding affinity of the ATP-hydrolyzing subunit KdpB by the formation of a transient KdpB/KdpC/ATP ternary complex.</text>
</comment>
<comment type="subunit">
    <text evidence="1">The system is composed of three essential subunits: KdpA, KdpB and KdpC.</text>
</comment>
<comment type="subcellular location">
    <subcellularLocation>
        <location evidence="1">Cell inner membrane</location>
        <topology evidence="1">Single-pass membrane protein</topology>
    </subcellularLocation>
</comment>
<comment type="similarity">
    <text evidence="1">Belongs to the KdpC family.</text>
</comment>
<keyword id="KW-0067">ATP-binding</keyword>
<keyword id="KW-0997">Cell inner membrane</keyword>
<keyword id="KW-1003">Cell membrane</keyword>
<keyword id="KW-0406">Ion transport</keyword>
<keyword id="KW-0472">Membrane</keyword>
<keyword id="KW-0547">Nucleotide-binding</keyword>
<keyword id="KW-0630">Potassium</keyword>
<keyword id="KW-0633">Potassium transport</keyword>
<keyword id="KW-0812">Transmembrane</keyword>
<keyword id="KW-1133">Transmembrane helix</keyword>
<keyword id="KW-0813">Transport</keyword>
<dbReference type="EMBL" id="CP000440">
    <property type="protein sequence ID" value="ABI87880.1"/>
    <property type="molecule type" value="Genomic_DNA"/>
</dbReference>
<dbReference type="RefSeq" id="WP_011657512.1">
    <property type="nucleotide sequence ID" value="NC_008390.1"/>
</dbReference>
<dbReference type="SMR" id="Q0BD93"/>
<dbReference type="GeneID" id="93085468"/>
<dbReference type="KEGG" id="bam:Bamb_2324"/>
<dbReference type="PATRIC" id="fig|339670.21.peg.2603"/>
<dbReference type="eggNOG" id="COG2156">
    <property type="taxonomic scope" value="Bacteria"/>
</dbReference>
<dbReference type="Proteomes" id="UP000000662">
    <property type="component" value="Chromosome 1"/>
</dbReference>
<dbReference type="GO" id="GO:0005886">
    <property type="term" value="C:plasma membrane"/>
    <property type="evidence" value="ECO:0007669"/>
    <property type="project" value="UniProtKB-SubCell"/>
</dbReference>
<dbReference type="GO" id="GO:0005524">
    <property type="term" value="F:ATP binding"/>
    <property type="evidence" value="ECO:0007669"/>
    <property type="project" value="UniProtKB-UniRule"/>
</dbReference>
<dbReference type="GO" id="GO:0008556">
    <property type="term" value="F:P-type potassium transmembrane transporter activity"/>
    <property type="evidence" value="ECO:0007669"/>
    <property type="project" value="InterPro"/>
</dbReference>
<dbReference type="HAMAP" id="MF_00276">
    <property type="entry name" value="KdpC"/>
    <property type="match status" value="1"/>
</dbReference>
<dbReference type="InterPro" id="IPR003820">
    <property type="entry name" value="KdpC"/>
</dbReference>
<dbReference type="NCBIfam" id="TIGR00681">
    <property type="entry name" value="kdpC"/>
    <property type="match status" value="1"/>
</dbReference>
<dbReference type="NCBIfam" id="NF001454">
    <property type="entry name" value="PRK00315.1"/>
    <property type="match status" value="1"/>
</dbReference>
<dbReference type="PANTHER" id="PTHR30042">
    <property type="entry name" value="POTASSIUM-TRANSPORTING ATPASE C CHAIN"/>
    <property type="match status" value="1"/>
</dbReference>
<dbReference type="PANTHER" id="PTHR30042:SF2">
    <property type="entry name" value="POTASSIUM-TRANSPORTING ATPASE KDPC SUBUNIT"/>
    <property type="match status" value="1"/>
</dbReference>
<dbReference type="Pfam" id="PF02669">
    <property type="entry name" value="KdpC"/>
    <property type="match status" value="1"/>
</dbReference>
<dbReference type="PIRSF" id="PIRSF001296">
    <property type="entry name" value="K_ATPase_KdpC"/>
    <property type="match status" value="1"/>
</dbReference>
<proteinExistence type="inferred from homology"/>
<gene>
    <name evidence="1" type="primary">kdpC</name>
    <name type="ordered locus">Bamb_2324</name>
</gene>
<reference key="1">
    <citation type="submission" date="2006-08" db="EMBL/GenBank/DDBJ databases">
        <title>Complete sequence of chromosome 1 of Burkholderia cepacia AMMD.</title>
        <authorList>
            <person name="Copeland A."/>
            <person name="Lucas S."/>
            <person name="Lapidus A."/>
            <person name="Barry K."/>
            <person name="Detter J.C."/>
            <person name="Glavina del Rio T."/>
            <person name="Hammon N."/>
            <person name="Israni S."/>
            <person name="Pitluck S."/>
            <person name="Bruce D."/>
            <person name="Chain P."/>
            <person name="Malfatti S."/>
            <person name="Shin M."/>
            <person name="Vergez L."/>
            <person name="Schmutz J."/>
            <person name="Larimer F."/>
            <person name="Land M."/>
            <person name="Hauser L."/>
            <person name="Kyrpides N."/>
            <person name="Kim E."/>
            <person name="Parke J."/>
            <person name="Coenye T."/>
            <person name="Konstantinidis K."/>
            <person name="Ramette A."/>
            <person name="Tiedje J."/>
            <person name="Richardson P."/>
        </authorList>
    </citation>
    <scope>NUCLEOTIDE SEQUENCE [LARGE SCALE GENOMIC DNA]</scope>
    <source>
        <strain>ATCC BAA-244 / DSM 16087 / CCUG 44356 / LMG 19182 / AMMD</strain>
    </source>
</reference>